<sequence>MCGIVGYIGQAGDTRNYYALDVVLEGLRRLEYRGYDSAGVAVYADGEISFRKKAGKVAALETEIARAPLPDSVLGIGHTRWATHGGPTDVNAHPHVVAGGRLAVVHNGIIENFSELRAELTAKGYNFVSSTDTEVAATLLAEIYKTEAEGDLTRAMQLTGQRLDGAFTLLAIHVDHPDRIVAARRNSPLVIGLGEGENFLGSDVSGFIDYTRSAVELSNDQVVTITADSYEITDFHGAPSEGKPFAVEWDAAAAEKGGFHSFMDKEIHDQPAAVRDTLLGRMDEDGKLMLDELRIDESILRSVDKIIVVACGTAAYAGQVARYAIEHWCRIPTEVELAHEFRYRDPIVNEKTLVVALSQSGETMDTLMAVRHAREQGAKVVAICNTVGSTLPREADACLYTYAGPEIAVASTKAFLAQITASYLLGLYLAQLRGNKFADEVRVILDSLREMPAKIQEVIDNEEQIKQLGRSMVDAKSVLFLGRHVGYPVALEGALKLKEIAYLHAEGFAAGELKHGPIALVEDGQPVFVIVPSPRGRDSLHAKVVSNIQEIRARGAVTIVIAEEGDTAVDEHANYIIRIPQAPTLMQPLLATVPLQIFACAVATEKGFDVDQPRNLAKSVTVE</sequence>
<name>GLMS_COREF</name>
<proteinExistence type="inferred from homology"/>
<gene>
    <name evidence="1" type="primary">glmS</name>
    <name type="ordered locus">CE2172</name>
</gene>
<feature type="initiator methionine" description="Removed" evidence="1">
    <location>
        <position position="1"/>
    </location>
</feature>
<feature type="chain" id="PRO_0000135326" description="Glutamine--fructose-6-phosphate aminotransferase [isomerizing]">
    <location>
        <begin position="2"/>
        <end position="623"/>
    </location>
</feature>
<feature type="domain" description="Glutamine amidotransferase type-2" evidence="1">
    <location>
        <begin position="2"/>
        <end position="228"/>
    </location>
</feature>
<feature type="domain" description="SIS 1" evidence="1">
    <location>
        <begin position="295"/>
        <end position="435"/>
    </location>
</feature>
<feature type="domain" description="SIS 2" evidence="1">
    <location>
        <begin position="468"/>
        <end position="613"/>
    </location>
</feature>
<feature type="active site" description="Nucleophile; for GATase activity" evidence="1">
    <location>
        <position position="2"/>
    </location>
</feature>
<feature type="active site" description="For Fru-6P isomerization activity" evidence="1">
    <location>
        <position position="618"/>
    </location>
</feature>
<accession>Q8FNH2</accession>
<protein>
    <recommendedName>
        <fullName evidence="1">Glutamine--fructose-6-phosphate aminotransferase [isomerizing]</fullName>
        <ecNumber evidence="1">2.6.1.16</ecNumber>
    </recommendedName>
    <alternativeName>
        <fullName evidence="1">D-fructose-6-phosphate amidotransferase</fullName>
    </alternativeName>
    <alternativeName>
        <fullName evidence="1">GFAT</fullName>
    </alternativeName>
    <alternativeName>
        <fullName evidence="1">Glucosamine-6-phosphate synthase</fullName>
    </alternativeName>
    <alternativeName>
        <fullName evidence="1">Hexosephosphate aminotransferase</fullName>
    </alternativeName>
    <alternativeName>
        <fullName evidence="1">L-glutamine--D-fructose-6-phosphate amidotransferase</fullName>
    </alternativeName>
</protein>
<keyword id="KW-0032">Aminotransferase</keyword>
<keyword id="KW-0963">Cytoplasm</keyword>
<keyword id="KW-0315">Glutamine amidotransferase</keyword>
<keyword id="KW-1185">Reference proteome</keyword>
<keyword id="KW-0677">Repeat</keyword>
<keyword id="KW-0808">Transferase</keyword>
<evidence type="ECO:0000255" key="1">
    <source>
        <dbReference type="HAMAP-Rule" id="MF_00164"/>
    </source>
</evidence>
<reference key="1">
    <citation type="journal article" date="2003" name="Genome Res.">
        <title>Comparative complete genome sequence analysis of the amino acid replacements responsible for the thermostability of Corynebacterium efficiens.</title>
        <authorList>
            <person name="Nishio Y."/>
            <person name="Nakamura Y."/>
            <person name="Kawarabayasi Y."/>
            <person name="Usuda Y."/>
            <person name="Kimura E."/>
            <person name="Sugimoto S."/>
            <person name="Matsui K."/>
            <person name="Yamagishi A."/>
            <person name="Kikuchi H."/>
            <person name="Ikeo K."/>
            <person name="Gojobori T."/>
        </authorList>
    </citation>
    <scope>NUCLEOTIDE SEQUENCE [LARGE SCALE GENOMIC DNA]</scope>
    <source>
        <strain>DSM 44549 / YS-314 / AJ 12310 / JCM 11189 / NBRC 100395</strain>
    </source>
</reference>
<organism>
    <name type="scientific">Corynebacterium efficiens (strain DSM 44549 / YS-314 / AJ 12310 / JCM 11189 / NBRC 100395)</name>
    <dbReference type="NCBI Taxonomy" id="196164"/>
    <lineage>
        <taxon>Bacteria</taxon>
        <taxon>Bacillati</taxon>
        <taxon>Actinomycetota</taxon>
        <taxon>Actinomycetes</taxon>
        <taxon>Mycobacteriales</taxon>
        <taxon>Corynebacteriaceae</taxon>
        <taxon>Corynebacterium</taxon>
    </lineage>
</organism>
<dbReference type="EC" id="2.6.1.16" evidence="1"/>
<dbReference type="EMBL" id="BA000035">
    <property type="protein sequence ID" value="BAC18982.1"/>
    <property type="molecule type" value="Genomic_DNA"/>
</dbReference>
<dbReference type="RefSeq" id="WP_006768175.1">
    <property type="nucleotide sequence ID" value="NC_004369.1"/>
</dbReference>
<dbReference type="SMR" id="Q8FNH2"/>
<dbReference type="STRING" id="196164.gene:10742603"/>
<dbReference type="KEGG" id="cef:CE2172"/>
<dbReference type="eggNOG" id="COG0449">
    <property type="taxonomic scope" value="Bacteria"/>
</dbReference>
<dbReference type="HOGENOM" id="CLU_012520_5_2_11"/>
<dbReference type="OrthoDB" id="9761808at2"/>
<dbReference type="Proteomes" id="UP000001409">
    <property type="component" value="Chromosome"/>
</dbReference>
<dbReference type="GO" id="GO:0005829">
    <property type="term" value="C:cytosol"/>
    <property type="evidence" value="ECO:0007669"/>
    <property type="project" value="TreeGrafter"/>
</dbReference>
<dbReference type="GO" id="GO:0097367">
    <property type="term" value="F:carbohydrate derivative binding"/>
    <property type="evidence" value="ECO:0007669"/>
    <property type="project" value="InterPro"/>
</dbReference>
<dbReference type="GO" id="GO:0004360">
    <property type="term" value="F:glutamine-fructose-6-phosphate transaminase (isomerizing) activity"/>
    <property type="evidence" value="ECO:0007669"/>
    <property type="project" value="UniProtKB-UniRule"/>
</dbReference>
<dbReference type="GO" id="GO:0005975">
    <property type="term" value="P:carbohydrate metabolic process"/>
    <property type="evidence" value="ECO:0007669"/>
    <property type="project" value="UniProtKB-UniRule"/>
</dbReference>
<dbReference type="GO" id="GO:0006002">
    <property type="term" value="P:fructose 6-phosphate metabolic process"/>
    <property type="evidence" value="ECO:0007669"/>
    <property type="project" value="TreeGrafter"/>
</dbReference>
<dbReference type="GO" id="GO:0006487">
    <property type="term" value="P:protein N-linked glycosylation"/>
    <property type="evidence" value="ECO:0007669"/>
    <property type="project" value="TreeGrafter"/>
</dbReference>
<dbReference type="GO" id="GO:0006047">
    <property type="term" value="P:UDP-N-acetylglucosamine metabolic process"/>
    <property type="evidence" value="ECO:0007669"/>
    <property type="project" value="TreeGrafter"/>
</dbReference>
<dbReference type="CDD" id="cd00714">
    <property type="entry name" value="GFAT"/>
    <property type="match status" value="1"/>
</dbReference>
<dbReference type="CDD" id="cd05008">
    <property type="entry name" value="SIS_GlmS_GlmD_1"/>
    <property type="match status" value="1"/>
</dbReference>
<dbReference type="CDD" id="cd05009">
    <property type="entry name" value="SIS_GlmS_GlmD_2"/>
    <property type="match status" value="1"/>
</dbReference>
<dbReference type="FunFam" id="3.40.50.10490:FF:000001">
    <property type="entry name" value="Glutamine--fructose-6-phosphate aminotransferase [isomerizing]"/>
    <property type="match status" value="1"/>
</dbReference>
<dbReference type="FunFam" id="3.60.20.10:FF:000006">
    <property type="entry name" value="Glutamine--fructose-6-phosphate aminotransferase [isomerizing]"/>
    <property type="match status" value="1"/>
</dbReference>
<dbReference type="Gene3D" id="3.40.50.10490">
    <property type="entry name" value="Glucose-6-phosphate isomerase like protein, domain 1"/>
    <property type="match status" value="2"/>
</dbReference>
<dbReference type="Gene3D" id="3.60.20.10">
    <property type="entry name" value="Glutamine Phosphoribosylpyrophosphate, subunit 1, domain 1"/>
    <property type="match status" value="1"/>
</dbReference>
<dbReference type="HAMAP" id="MF_00164">
    <property type="entry name" value="GlmS"/>
    <property type="match status" value="1"/>
</dbReference>
<dbReference type="InterPro" id="IPR017932">
    <property type="entry name" value="GATase_2_dom"/>
</dbReference>
<dbReference type="InterPro" id="IPR005855">
    <property type="entry name" value="GFAT"/>
</dbReference>
<dbReference type="InterPro" id="IPR047084">
    <property type="entry name" value="GFAT_N"/>
</dbReference>
<dbReference type="InterPro" id="IPR035466">
    <property type="entry name" value="GlmS/AgaS_SIS"/>
</dbReference>
<dbReference type="InterPro" id="IPR035490">
    <property type="entry name" value="GlmS/FrlB_SIS"/>
</dbReference>
<dbReference type="InterPro" id="IPR029055">
    <property type="entry name" value="Ntn_hydrolases_N"/>
</dbReference>
<dbReference type="InterPro" id="IPR001347">
    <property type="entry name" value="SIS_dom"/>
</dbReference>
<dbReference type="InterPro" id="IPR046348">
    <property type="entry name" value="SIS_dom_sf"/>
</dbReference>
<dbReference type="NCBIfam" id="TIGR01135">
    <property type="entry name" value="glmS"/>
    <property type="match status" value="1"/>
</dbReference>
<dbReference type="NCBIfam" id="NF001484">
    <property type="entry name" value="PRK00331.1"/>
    <property type="match status" value="1"/>
</dbReference>
<dbReference type="PANTHER" id="PTHR10937">
    <property type="entry name" value="GLUCOSAMINE--FRUCTOSE-6-PHOSPHATE AMINOTRANSFERASE, ISOMERIZING"/>
    <property type="match status" value="1"/>
</dbReference>
<dbReference type="PANTHER" id="PTHR10937:SF0">
    <property type="entry name" value="GLUTAMINE--FRUCTOSE-6-PHOSPHATE TRANSAMINASE (ISOMERIZING)"/>
    <property type="match status" value="1"/>
</dbReference>
<dbReference type="Pfam" id="PF13522">
    <property type="entry name" value="GATase_6"/>
    <property type="match status" value="1"/>
</dbReference>
<dbReference type="Pfam" id="PF01380">
    <property type="entry name" value="SIS"/>
    <property type="match status" value="2"/>
</dbReference>
<dbReference type="SUPFAM" id="SSF56235">
    <property type="entry name" value="N-terminal nucleophile aminohydrolases (Ntn hydrolases)"/>
    <property type="match status" value="1"/>
</dbReference>
<dbReference type="SUPFAM" id="SSF53697">
    <property type="entry name" value="SIS domain"/>
    <property type="match status" value="1"/>
</dbReference>
<dbReference type="PROSITE" id="PS51278">
    <property type="entry name" value="GATASE_TYPE_2"/>
    <property type="match status" value="1"/>
</dbReference>
<dbReference type="PROSITE" id="PS51464">
    <property type="entry name" value="SIS"/>
    <property type="match status" value="2"/>
</dbReference>
<comment type="function">
    <text evidence="1">Catalyzes the first step in hexosamine metabolism, converting fructose-6P into glucosamine-6P using glutamine as a nitrogen source.</text>
</comment>
<comment type="catalytic activity">
    <reaction evidence="1">
        <text>D-fructose 6-phosphate + L-glutamine = D-glucosamine 6-phosphate + L-glutamate</text>
        <dbReference type="Rhea" id="RHEA:13237"/>
        <dbReference type="ChEBI" id="CHEBI:29985"/>
        <dbReference type="ChEBI" id="CHEBI:58359"/>
        <dbReference type="ChEBI" id="CHEBI:58725"/>
        <dbReference type="ChEBI" id="CHEBI:61527"/>
        <dbReference type="EC" id="2.6.1.16"/>
    </reaction>
</comment>
<comment type="subunit">
    <text evidence="1">Homodimer.</text>
</comment>
<comment type="subcellular location">
    <subcellularLocation>
        <location evidence="1">Cytoplasm</location>
    </subcellularLocation>
</comment>